<accession>Q720Y0</accession>
<name>NADE_LISMF</name>
<comment type="function">
    <text evidence="1">Catalyzes the ATP-dependent amidation of deamido-NAD to form NAD. Uses ammonia as a nitrogen source.</text>
</comment>
<comment type="catalytic activity">
    <reaction evidence="1">
        <text>deamido-NAD(+) + NH4(+) + ATP = AMP + diphosphate + NAD(+) + H(+)</text>
        <dbReference type="Rhea" id="RHEA:21188"/>
        <dbReference type="ChEBI" id="CHEBI:15378"/>
        <dbReference type="ChEBI" id="CHEBI:28938"/>
        <dbReference type="ChEBI" id="CHEBI:30616"/>
        <dbReference type="ChEBI" id="CHEBI:33019"/>
        <dbReference type="ChEBI" id="CHEBI:57540"/>
        <dbReference type="ChEBI" id="CHEBI:58437"/>
        <dbReference type="ChEBI" id="CHEBI:456215"/>
        <dbReference type="EC" id="6.3.1.5"/>
    </reaction>
</comment>
<comment type="pathway">
    <text evidence="1">Cofactor biosynthesis; NAD(+) biosynthesis; NAD(+) from deamido-NAD(+) (ammonia route): step 1/1.</text>
</comment>
<comment type="subunit">
    <text evidence="1">Homodimer.</text>
</comment>
<comment type="similarity">
    <text evidence="1">Belongs to the NAD synthetase family.</text>
</comment>
<reference key="1">
    <citation type="journal article" date="2004" name="Nucleic Acids Res.">
        <title>Whole genome comparisons of serotype 4b and 1/2a strains of the food-borne pathogen Listeria monocytogenes reveal new insights into the core genome components of this species.</title>
        <authorList>
            <person name="Nelson K.E."/>
            <person name="Fouts D.E."/>
            <person name="Mongodin E.F."/>
            <person name="Ravel J."/>
            <person name="DeBoy R.T."/>
            <person name="Kolonay J.F."/>
            <person name="Rasko D.A."/>
            <person name="Angiuoli S.V."/>
            <person name="Gill S.R."/>
            <person name="Paulsen I.T."/>
            <person name="Peterson J.D."/>
            <person name="White O."/>
            <person name="Nelson W.C."/>
            <person name="Nierman W.C."/>
            <person name="Beanan M.J."/>
            <person name="Brinkac L.M."/>
            <person name="Daugherty S.C."/>
            <person name="Dodson R.J."/>
            <person name="Durkin A.S."/>
            <person name="Madupu R."/>
            <person name="Haft D.H."/>
            <person name="Selengut J."/>
            <person name="Van Aken S.E."/>
            <person name="Khouri H.M."/>
            <person name="Fedorova N."/>
            <person name="Forberger H.A."/>
            <person name="Tran B."/>
            <person name="Kathariou S."/>
            <person name="Wonderling L.D."/>
            <person name="Uhlich G.A."/>
            <person name="Bayles D.O."/>
            <person name="Luchansky J.B."/>
            <person name="Fraser C.M."/>
        </authorList>
    </citation>
    <scope>NUCLEOTIDE SEQUENCE [LARGE SCALE GENOMIC DNA]</scope>
    <source>
        <strain>F2365</strain>
    </source>
</reference>
<feature type="chain" id="PRO_0000152178" description="NH(3)-dependent NAD(+) synthetase">
    <location>
        <begin position="1"/>
        <end position="274"/>
    </location>
</feature>
<feature type="binding site" evidence="1">
    <location>
        <begin position="46"/>
        <end position="53"/>
    </location>
    <ligand>
        <name>ATP</name>
        <dbReference type="ChEBI" id="CHEBI:30616"/>
    </ligand>
</feature>
<feature type="binding site" evidence="1">
    <location>
        <position position="52"/>
    </location>
    <ligand>
        <name>Mg(2+)</name>
        <dbReference type="ChEBI" id="CHEBI:18420"/>
    </ligand>
</feature>
<feature type="binding site" evidence="1">
    <location>
        <position position="140"/>
    </location>
    <ligand>
        <name>deamido-NAD(+)</name>
        <dbReference type="ChEBI" id="CHEBI:58437"/>
    </ligand>
</feature>
<feature type="binding site" evidence="1">
    <location>
        <position position="160"/>
    </location>
    <ligand>
        <name>ATP</name>
        <dbReference type="ChEBI" id="CHEBI:30616"/>
    </ligand>
</feature>
<feature type="binding site" evidence="1">
    <location>
        <position position="165"/>
    </location>
    <ligand>
        <name>Mg(2+)</name>
        <dbReference type="ChEBI" id="CHEBI:18420"/>
    </ligand>
</feature>
<feature type="binding site" evidence="1">
    <location>
        <position position="173"/>
    </location>
    <ligand>
        <name>deamido-NAD(+)</name>
        <dbReference type="ChEBI" id="CHEBI:58437"/>
    </ligand>
</feature>
<feature type="binding site" evidence="1">
    <location>
        <position position="180"/>
    </location>
    <ligand>
        <name>deamido-NAD(+)</name>
        <dbReference type="ChEBI" id="CHEBI:58437"/>
    </ligand>
</feature>
<feature type="binding site" evidence="1">
    <location>
        <position position="189"/>
    </location>
    <ligand>
        <name>ATP</name>
        <dbReference type="ChEBI" id="CHEBI:30616"/>
    </ligand>
</feature>
<feature type="binding site" evidence="1">
    <location>
        <position position="211"/>
    </location>
    <ligand>
        <name>ATP</name>
        <dbReference type="ChEBI" id="CHEBI:30616"/>
    </ligand>
</feature>
<feature type="binding site" evidence="1">
    <location>
        <begin position="260"/>
        <end position="261"/>
    </location>
    <ligand>
        <name>deamido-NAD(+)</name>
        <dbReference type="ChEBI" id="CHEBI:58437"/>
    </ligand>
</feature>
<protein>
    <recommendedName>
        <fullName evidence="1">NH(3)-dependent NAD(+) synthetase</fullName>
        <ecNumber evidence="1">6.3.1.5</ecNumber>
    </recommendedName>
</protein>
<organism>
    <name type="scientific">Listeria monocytogenes serotype 4b (strain F2365)</name>
    <dbReference type="NCBI Taxonomy" id="265669"/>
    <lineage>
        <taxon>Bacteria</taxon>
        <taxon>Bacillati</taxon>
        <taxon>Bacillota</taxon>
        <taxon>Bacilli</taxon>
        <taxon>Bacillales</taxon>
        <taxon>Listeriaceae</taxon>
        <taxon>Listeria</taxon>
    </lineage>
</organism>
<dbReference type="EC" id="6.3.1.5" evidence="1"/>
<dbReference type="EMBL" id="AE017262">
    <property type="protein sequence ID" value="AAT03884.1"/>
    <property type="molecule type" value="Genomic_DNA"/>
</dbReference>
<dbReference type="RefSeq" id="WP_003727000.1">
    <property type="nucleotide sequence ID" value="NC_002973.6"/>
</dbReference>
<dbReference type="SMR" id="Q720Y0"/>
<dbReference type="KEGG" id="lmf:LMOf2365_1107"/>
<dbReference type="HOGENOM" id="CLU_059327_3_0_9"/>
<dbReference type="UniPathway" id="UPA00253">
    <property type="reaction ID" value="UER00333"/>
</dbReference>
<dbReference type="GO" id="GO:0005737">
    <property type="term" value="C:cytoplasm"/>
    <property type="evidence" value="ECO:0007669"/>
    <property type="project" value="InterPro"/>
</dbReference>
<dbReference type="GO" id="GO:0005524">
    <property type="term" value="F:ATP binding"/>
    <property type="evidence" value="ECO:0007669"/>
    <property type="project" value="UniProtKB-UniRule"/>
</dbReference>
<dbReference type="GO" id="GO:0004359">
    <property type="term" value="F:glutaminase activity"/>
    <property type="evidence" value="ECO:0007669"/>
    <property type="project" value="InterPro"/>
</dbReference>
<dbReference type="GO" id="GO:0046872">
    <property type="term" value="F:metal ion binding"/>
    <property type="evidence" value="ECO:0007669"/>
    <property type="project" value="UniProtKB-KW"/>
</dbReference>
<dbReference type="GO" id="GO:0003952">
    <property type="term" value="F:NAD+ synthase (glutamine-hydrolyzing) activity"/>
    <property type="evidence" value="ECO:0007669"/>
    <property type="project" value="InterPro"/>
</dbReference>
<dbReference type="GO" id="GO:0008795">
    <property type="term" value="F:NAD+ synthase activity"/>
    <property type="evidence" value="ECO:0007669"/>
    <property type="project" value="UniProtKB-UniRule"/>
</dbReference>
<dbReference type="GO" id="GO:0009435">
    <property type="term" value="P:NAD biosynthetic process"/>
    <property type="evidence" value="ECO:0007669"/>
    <property type="project" value="UniProtKB-UniRule"/>
</dbReference>
<dbReference type="CDD" id="cd00553">
    <property type="entry name" value="NAD_synthase"/>
    <property type="match status" value="1"/>
</dbReference>
<dbReference type="FunFam" id="3.40.50.620:FF:000015">
    <property type="entry name" value="NH(3)-dependent NAD(+) synthetase"/>
    <property type="match status" value="1"/>
</dbReference>
<dbReference type="Gene3D" id="3.40.50.620">
    <property type="entry name" value="HUPs"/>
    <property type="match status" value="1"/>
</dbReference>
<dbReference type="HAMAP" id="MF_00193">
    <property type="entry name" value="NadE_ammonia_dep"/>
    <property type="match status" value="1"/>
</dbReference>
<dbReference type="InterPro" id="IPR022310">
    <property type="entry name" value="NAD/GMP_synthase"/>
</dbReference>
<dbReference type="InterPro" id="IPR003694">
    <property type="entry name" value="NAD_synthase"/>
</dbReference>
<dbReference type="InterPro" id="IPR022926">
    <property type="entry name" value="NH(3)-dep_NAD(+)_synth"/>
</dbReference>
<dbReference type="InterPro" id="IPR014729">
    <property type="entry name" value="Rossmann-like_a/b/a_fold"/>
</dbReference>
<dbReference type="NCBIfam" id="TIGR00552">
    <property type="entry name" value="nadE"/>
    <property type="match status" value="1"/>
</dbReference>
<dbReference type="NCBIfam" id="NF001979">
    <property type="entry name" value="PRK00768.1"/>
    <property type="match status" value="1"/>
</dbReference>
<dbReference type="PANTHER" id="PTHR23090">
    <property type="entry name" value="NH 3 /GLUTAMINE-DEPENDENT NAD + SYNTHETASE"/>
    <property type="match status" value="1"/>
</dbReference>
<dbReference type="PANTHER" id="PTHR23090:SF7">
    <property type="entry name" value="NH(3)-DEPENDENT NAD(+) SYNTHETASE"/>
    <property type="match status" value="1"/>
</dbReference>
<dbReference type="Pfam" id="PF02540">
    <property type="entry name" value="NAD_synthase"/>
    <property type="match status" value="1"/>
</dbReference>
<dbReference type="SUPFAM" id="SSF52402">
    <property type="entry name" value="Adenine nucleotide alpha hydrolases-like"/>
    <property type="match status" value="1"/>
</dbReference>
<proteinExistence type="inferred from homology"/>
<gene>
    <name evidence="1" type="primary">nadE</name>
    <name type="ordered locus">LMOf2365_1107</name>
</gene>
<evidence type="ECO:0000255" key="1">
    <source>
        <dbReference type="HAMAP-Rule" id="MF_00193"/>
    </source>
</evidence>
<keyword id="KW-0067">ATP-binding</keyword>
<keyword id="KW-0436">Ligase</keyword>
<keyword id="KW-0460">Magnesium</keyword>
<keyword id="KW-0479">Metal-binding</keyword>
<keyword id="KW-0520">NAD</keyword>
<keyword id="KW-0547">Nucleotide-binding</keyword>
<sequence length="274" mass="30561">MEIRERILADMQVAETIDAHEEIRKSVEFLKAYLKKNTFLKSFVLGISGGQDSTLTGKLAQMAISEMRAETGDDEYQFFAVSLPYGTQLDESDRQDALNFMEPDNRLTVNIKASVDASVAALAEAGVELSDFAKGNEKARERMKVQYAIAAMHKGVVVGTDHSAEAVTGFYTKYGDGGTDINPLFRLNKRQGKALLKELGCPEHLYLKKPTADLEDNKPALPDEVALGVTYDQIDDYLEGKEVPADAAAKIENWFIKTEHKRHMAITIFDDFWK</sequence>